<feature type="chain" id="PRO_0000145383" description="DNA topoisomerase 2">
    <location>
        <begin position="1"/>
        <end position="1406"/>
    </location>
</feature>
<feature type="domain" description="Toprim" evidence="3">
    <location>
        <begin position="441"/>
        <end position="555"/>
    </location>
</feature>
<feature type="domain" description="Topo IIA-type catalytic" evidence="4">
    <location>
        <begin position="690"/>
        <end position="1159"/>
    </location>
</feature>
<feature type="region of interest" description="Interaction with DNA" evidence="2">
    <location>
        <begin position="332"/>
        <end position="334"/>
    </location>
</feature>
<feature type="region of interest" description="Interaction with DNA" evidence="2">
    <location>
        <begin position="963"/>
        <end position="972"/>
    </location>
</feature>
<feature type="region of interest" description="Disordered" evidence="5">
    <location>
        <begin position="1079"/>
        <end position="1106"/>
    </location>
</feature>
<feature type="region of interest" description="Disordered" evidence="5">
    <location>
        <begin position="1183"/>
        <end position="1215"/>
    </location>
</feature>
<feature type="region of interest" description="Disordered" evidence="5">
    <location>
        <begin position="1230"/>
        <end position="1287"/>
    </location>
</feature>
<feature type="region of interest" description="Disordered" evidence="5">
    <location>
        <begin position="1303"/>
        <end position="1406"/>
    </location>
</feature>
<feature type="compositionally biased region" description="Acidic residues" evidence="5">
    <location>
        <begin position="1079"/>
        <end position="1089"/>
    </location>
</feature>
<feature type="compositionally biased region" description="Basic and acidic residues" evidence="5">
    <location>
        <begin position="1090"/>
        <end position="1100"/>
    </location>
</feature>
<feature type="compositionally biased region" description="Basic residues" evidence="5">
    <location>
        <begin position="1204"/>
        <end position="1214"/>
    </location>
</feature>
<feature type="compositionally biased region" description="Polar residues" evidence="5">
    <location>
        <begin position="1261"/>
        <end position="1274"/>
    </location>
</feature>
<feature type="compositionally biased region" description="Basic residues" evidence="5">
    <location>
        <begin position="1326"/>
        <end position="1336"/>
    </location>
</feature>
<feature type="compositionally biased region" description="Acidic residues" evidence="5">
    <location>
        <begin position="1341"/>
        <end position="1359"/>
    </location>
</feature>
<feature type="compositionally biased region" description="Acidic residues" evidence="5">
    <location>
        <begin position="1381"/>
        <end position="1406"/>
    </location>
</feature>
<feature type="active site" description="O-(5'-phospho-DNA)-tyrosine intermediate" evidence="4">
    <location>
        <position position="780"/>
    </location>
</feature>
<feature type="binding site" evidence="2">
    <location>
        <position position="69"/>
    </location>
    <ligand>
        <name>ATP</name>
        <dbReference type="ChEBI" id="CHEBI:30616"/>
    </ligand>
</feature>
<feature type="binding site" evidence="2">
    <location>
        <position position="98"/>
    </location>
    <ligand>
        <name>ATP</name>
        <dbReference type="ChEBI" id="CHEBI:30616"/>
    </ligand>
</feature>
<feature type="binding site" evidence="2">
    <location>
        <begin position="126"/>
        <end position="128"/>
    </location>
    <ligand>
        <name>ATP</name>
        <dbReference type="ChEBI" id="CHEBI:30616"/>
    </ligand>
</feature>
<feature type="binding site" evidence="2">
    <location>
        <begin position="139"/>
        <end position="146"/>
    </location>
    <ligand>
        <name>ATP</name>
        <dbReference type="ChEBI" id="CHEBI:30616"/>
    </ligand>
</feature>
<feature type="binding site" evidence="2">
    <location>
        <begin position="363"/>
        <end position="365"/>
    </location>
    <ligand>
        <name>ATP</name>
        <dbReference type="ChEBI" id="CHEBI:30616"/>
    </ligand>
</feature>
<feature type="binding site" evidence="3">
    <location>
        <position position="447"/>
    </location>
    <ligand>
        <name>Mg(2+)</name>
        <dbReference type="ChEBI" id="CHEBI:18420"/>
        <label>1</label>
        <note>catalytic</note>
    </ligand>
</feature>
<feature type="binding site" evidence="3">
    <location>
        <position position="524"/>
    </location>
    <ligand>
        <name>Mg(2+)</name>
        <dbReference type="ChEBI" id="CHEBI:18420"/>
        <label>1</label>
        <note>catalytic</note>
    </ligand>
</feature>
<feature type="binding site" evidence="3">
    <location>
        <position position="524"/>
    </location>
    <ligand>
        <name>Mg(2+)</name>
        <dbReference type="ChEBI" id="CHEBI:18420"/>
        <label>2</label>
    </ligand>
</feature>
<feature type="binding site" evidence="3">
    <location>
        <position position="526"/>
    </location>
    <ligand>
        <name>Mg(2+)</name>
        <dbReference type="ChEBI" id="CHEBI:18420"/>
        <label>2</label>
    </ligand>
</feature>
<feature type="site" description="Interaction with DNA" evidence="3">
    <location>
        <position position="475"/>
    </location>
</feature>
<feature type="site" description="Interaction with DNA" evidence="3">
    <location>
        <position position="478"/>
    </location>
</feature>
<feature type="site" description="Interaction with DNA" evidence="3">
    <location>
        <position position="648"/>
    </location>
</feature>
<feature type="site" description="Interaction with DNA" evidence="3">
    <location>
        <position position="649"/>
    </location>
</feature>
<feature type="site" description="Interaction with DNA" evidence="3">
    <location>
        <position position="698"/>
    </location>
</feature>
<feature type="site" description="Interaction with DNA" evidence="3">
    <location>
        <position position="732"/>
    </location>
</feature>
<feature type="site" description="Transition state stabilizer" evidence="1">
    <location>
        <position position="779"/>
    </location>
</feature>
<feature type="site" description="Important for DNA bending; intercalates between base pairs of target DNA" evidence="1">
    <location>
        <position position="831"/>
    </location>
</feature>
<feature type="site" description="Interaction with DNA" evidence="3">
    <location>
        <position position="906"/>
    </location>
</feature>
<feature type="sequence conflict" description="In Ref. 1; BAA33955." evidence="6" ref="1">
    <original>G</original>
    <variation>V</variation>
    <location>
        <position position="190"/>
    </location>
</feature>
<feature type="sequence conflict" description="In Ref. 1; BAA33955." evidence="6" ref="1">
    <original>R</original>
    <variation>S</variation>
    <location>
        <position position="688"/>
    </location>
</feature>
<gene>
    <name type="primary">TOP2</name>
    <name type="ordered locus">CAGL0J05610g</name>
</gene>
<protein>
    <recommendedName>
        <fullName>DNA topoisomerase 2</fullName>
        <ecNumber evidence="3">5.6.2.2</ecNumber>
    </recommendedName>
    <alternativeName>
        <fullName>DNA topoisomerase II</fullName>
    </alternativeName>
</protein>
<keyword id="KW-0067">ATP-binding</keyword>
<keyword id="KW-0238">DNA-binding</keyword>
<keyword id="KW-0413">Isomerase</keyword>
<keyword id="KW-0460">Magnesium</keyword>
<keyword id="KW-0479">Metal-binding</keyword>
<keyword id="KW-0547">Nucleotide-binding</keyword>
<keyword id="KW-0539">Nucleus</keyword>
<keyword id="KW-0597">Phosphoprotein</keyword>
<keyword id="KW-1185">Reference proteome</keyword>
<keyword id="KW-0799">Topoisomerase</keyword>
<accession>O93794</accession>
<accession>Q6FP95</accession>
<sequence>MSEPKTASERYQKISQLEHILKRPDTYIGSVEIQEQEQWIYDEETDCMIDKTVNIVPGLFKIFDEILVNAADNKVRDPSMKRIDVTINPEENFIEVRNDGKGIPIEIHEKEKIYIPELIFGHLLTSSNYDDDEKKVTGGRNGYGAKLCNIFSTEFTLETADPKNGRKYVQTWENNMNVCHPPKITSYKKGPSYTKVAFKPDLSRFGMESLDSDILGVMRRRVYDINGSVRDVNVYLNGKPLKIRNFKNYVELYLKSLEKMRKMDNGESDTTPSNIPTILYERVSDRWEIAFAVSDISFKQVSFVNSIATTTGGTHVNYIADQIVRKVSDILKKKKKNIKPYQIKNNMFIFINCLIENPAFTSQTKEQLTTRVKDFGSRCDISSDYINKIMKTDLATKIFEIADENANNALKKSDGSRKSRITDYPKLEDANKAGTKDGYKCTLILTEGDSALSLAVAGLAVVGRDYYGCYPLRGKMLNVREATADQILKNAEIQAIKKIMGLQHRKKYEDTKSLRYGHLMIMTDQDHDGSHIKGLIINFIETSFPGLLDIPGFLIEFITPIVKVTITKPIKKVISFFNLPDYEKWREEESHKYSWKQKYYKGLGTSTSPEIIEYFSNLDTHLKKFHALQGDDKDLIDLAFSKKKADDRKEWLRQYEPGTVLDPTLNEIPISDFINKELILFSLADNVRSIPSVLDGFKPGQRKVLYTCFKKNLTTEKKVANLAPAVSDYTAYHHGEQALVQTIIGMAQNFVGTNNIYFLKPNGAFGTRATGGKDAAAARYIYTELNKIARKVFHPADDPLFRYVQEDEKTVEPEWYLPVVPMVLINGAEGIGTGWSTSIPPFNPLDVVNNIRHLLNDEEMDDMHPWFRGWTGTMEKIESQRYRMYGRIEQVGPNTLEITELPARTWTSTIKEHLLLGLGGSEKVKPWIKDMEEQHAETIKFIIKLTDEEMTKTRKLGFYERFKLISPISLQNMVAFDYRGKIKKYDHVHEILKDFYEVRLEYYQKRKDYMTGRLQWEAEKLSFQVKFIKMIIDKSLIVTNKPKKQLISELEELGFPRINKEGKPHFGKIDEEVEAIISEDEDEDLEESEEATRKKDKDDESTVNGPEELFGTYEYLLGLKIWSLTKERYEKLLKQKQEKETELENLLKLSAKDLWNNDLDDFLTAYEDFQKMDLFLRNSAVPKTKGGKRKRKGGDDDDYDPSGKKKPARRIKKIKKEDDFDRILIKPQAKIKAKRPVKVKVEPPSSAASTPSVKEELGVSDVTSNASTPSTTIFDQKVKQENSDESGISAFSSKFNKIASAFDEDAPLDQITSEDTSVKESSAPAAKKKAPPKRKAKVVESSEDELSDANLSEQDDEEVVPVRRQRSSRQTAKKSYAEPIEISDEEDFIDDDEDEEVDSDESFNDE</sequence>
<dbReference type="EC" id="5.6.2.2" evidence="3"/>
<dbReference type="EMBL" id="AB010644">
    <property type="protein sequence ID" value="BAA33955.1"/>
    <property type="molecule type" value="Genomic_DNA"/>
</dbReference>
<dbReference type="EMBL" id="CR380956">
    <property type="protein sequence ID" value="CAG60900.1"/>
    <property type="molecule type" value="Genomic_DNA"/>
</dbReference>
<dbReference type="RefSeq" id="XP_447949.1">
    <property type="nucleotide sequence ID" value="XM_447949.1"/>
</dbReference>
<dbReference type="SMR" id="O93794"/>
<dbReference type="FunCoup" id="O93794">
    <property type="interactions" value="1280"/>
</dbReference>
<dbReference type="STRING" id="284593.O93794"/>
<dbReference type="EnsemblFungi" id="CAGL0J05610g-T">
    <property type="protein sequence ID" value="CAGL0J05610g-T-p1"/>
    <property type="gene ID" value="CAGL0J05610g"/>
</dbReference>
<dbReference type="GeneID" id="2889445"/>
<dbReference type="KEGG" id="cgr:2889445"/>
<dbReference type="CGD" id="CAL0133128">
    <property type="gene designation" value="TOP2"/>
</dbReference>
<dbReference type="VEuPathDB" id="FungiDB:CAGL0J05610g"/>
<dbReference type="eggNOG" id="KOG0355">
    <property type="taxonomic scope" value="Eukaryota"/>
</dbReference>
<dbReference type="HOGENOM" id="CLU_001935_1_0_1"/>
<dbReference type="InParanoid" id="O93794"/>
<dbReference type="OMA" id="TWTQDFK"/>
<dbReference type="Proteomes" id="UP000002428">
    <property type="component" value="Chromosome J"/>
</dbReference>
<dbReference type="GO" id="GO:0097047">
    <property type="term" value="C:DNA replication termination region"/>
    <property type="evidence" value="ECO:0007669"/>
    <property type="project" value="EnsemblFungi"/>
</dbReference>
<dbReference type="GO" id="GO:0000795">
    <property type="term" value="C:synaptonemal complex"/>
    <property type="evidence" value="ECO:0007669"/>
    <property type="project" value="EnsemblFungi"/>
</dbReference>
<dbReference type="GO" id="GO:0005524">
    <property type="term" value="F:ATP binding"/>
    <property type="evidence" value="ECO:0007669"/>
    <property type="project" value="UniProtKB-KW"/>
</dbReference>
<dbReference type="GO" id="GO:0003677">
    <property type="term" value="F:DNA binding"/>
    <property type="evidence" value="ECO:0007669"/>
    <property type="project" value="UniProtKB-KW"/>
</dbReference>
<dbReference type="GO" id="GO:0003918">
    <property type="term" value="F:DNA topoisomerase type II (double strand cut, ATP-hydrolyzing) activity"/>
    <property type="evidence" value="ECO:0007669"/>
    <property type="project" value="UniProtKB-EC"/>
</dbReference>
<dbReference type="GO" id="GO:0042802">
    <property type="term" value="F:identical protein binding"/>
    <property type="evidence" value="ECO:0007669"/>
    <property type="project" value="EnsemblFungi"/>
</dbReference>
<dbReference type="GO" id="GO:0046872">
    <property type="term" value="F:metal ion binding"/>
    <property type="evidence" value="ECO:0007669"/>
    <property type="project" value="UniProtKB-KW"/>
</dbReference>
<dbReference type="GO" id="GO:0031055">
    <property type="term" value="P:chromatin remodeling at centromere"/>
    <property type="evidence" value="ECO:0007669"/>
    <property type="project" value="EnsemblFungi"/>
</dbReference>
<dbReference type="GO" id="GO:0006271">
    <property type="term" value="P:DNA strand elongation involved in DNA replication"/>
    <property type="evidence" value="ECO:0007669"/>
    <property type="project" value="EnsemblFungi"/>
</dbReference>
<dbReference type="GO" id="GO:0006265">
    <property type="term" value="P:DNA topological change"/>
    <property type="evidence" value="ECO:0007669"/>
    <property type="project" value="EnsemblFungi"/>
</dbReference>
<dbReference type="GO" id="GO:0000019">
    <property type="term" value="P:regulation of mitotic recombination"/>
    <property type="evidence" value="ECO:0007669"/>
    <property type="project" value="EnsemblFungi"/>
</dbReference>
<dbReference type="GO" id="GO:0097046">
    <property type="term" value="P:replication fork progression beyond termination site"/>
    <property type="evidence" value="ECO:0007669"/>
    <property type="project" value="EnsemblFungi"/>
</dbReference>
<dbReference type="GO" id="GO:0000712">
    <property type="term" value="P:resolution of meiotic recombination intermediates"/>
    <property type="evidence" value="ECO:0007669"/>
    <property type="project" value="TreeGrafter"/>
</dbReference>
<dbReference type="GO" id="GO:0009303">
    <property type="term" value="P:rRNA transcription"/>
    <property type="evidence" value="ECO:0007669"/>
    <property type="project" value="EnsemblFungi"/>
</dbReference>
<dbReference type="GO" id="GO:0000819">
    <property type="term" value="P:sister chromatid segregation"/>
    <property type="evidence" value="ECO:0007669"/>
    <property type="project" value="TreeGrafter"/>
</dbReference>
<dbReference type="GO" id="GO:0000722">
    <property type="term" value="P:telomere maintenance via recombination"/>
    <property type="evidence" value="ECO:0007669"/>
    <property type="project" value="EnsemblFungi"/>
</dbReference>
<dbReference type="CDD" id="cd16930">
    <property type="entry name" value="HATPase_TopII-like"/>
    <property type="match status" value="1"/>
</dbReference>
<dbReference type="CDD" id="cd00187">
    <property type="entry name" value="TOP4c"/>
    <property type="match status" value="1"/>
</dbReference>
<dbReference type="CDD" id="cd03481">
    <property type="entry name" value="TopoIIA_Trans_ScTopoIIA"/>
    <property type="match status" value="1"/>
</dbReference>
<dbReference type="CDD" id="cd03365">
    <property type="entry name" value="TOPRIM_TopoIIA"/>
    <property type="match status" value="1"/>
</dbReference>
<dbReference type="FunFam" id="3.30.1360.40:FF:000011">
    <property type="entry name" value="DNA topoisomerase 2"/>
    <property type="match status" value="1"/>
</dbReference>
<dbReference type="FunFam" id="3.30.1490.30:FF:000001">
    <property type="entry name" value="DNA topoisomerase 2"/>
    <property type="match status" value="1"/>
</dbReference>
<dbReference type="FunFam" id="3.30.230.10:FF:000079">
    <property type="entry name" value="DNA topoisomerase 2"/>
    <property type="match status" value="1"/>
</dbReference>
<dbReference type="FunFam" id="3.30.565.10:FF:000004">
    <property type="entry name" value="DNA topoisomerase 2"/>
    <property type="match status" value="1"/>
</dbReference>
<dbReference type="FunFam" id="3.40.50.670:FF:000001">
    <property type="entry name" value="DNA topoisomerase 2"/>
    <property type="match status" value="2"/>
</dbReference>
<dbReference type="FunFam" id="3.90.199.10:FF:000002">
    <property type="entry name" value="DNA topoisomerase 2"/>
    <property type="match status" value="1"/>
</dbReference>
<dbReference type="Gene3D" id="3.30.1360.40">
    <property type="match status" value="1"/>
</dbReference>
<dbReference type="Gene3D" id="3.30.1490.30">
    <property type="match status" value="1"/>
</dbReference>
<dbReference type="Gene3D" id="3.30.230.10">
    <property type="match status" value="1"/>
</dbReference>
<dbReference type="Gene3D" id="3.40.50.670">
    <property type="match status" value="1"/>
</dbReference>
<dbReference type="Gene3D" id="3.30.565.10">
    <property type="entry name" value="Histidine kinase-like ATPase, C-terminal domain"/>
    <property type="match status" value="1"/>
</dbReference>
<dbReference type="Gene3D" id="3.90.199.10">
    <property type="entry name" value="Topoisomerase II, domain 5"/>
    <property type="match status" value="1"/>
</dbReference>
<dbReference type="Gene3D" id="1.10.268.10">
    <property type="entry name" value="Topoisomerase, domain 3"/>
    <property type="match status" value="1"/>
</dbReference>
<dbReference type="InterPro" id="IPR050634">
    <property type="entry name" value="DNA_Topoisomerase_II"/>
</dbReference>
<dbReference type="InterPro" id="IPR036890">
    <property type="entry name" value="HATPase_C_sf"/>
</dbReference>
<dbReference type="InterPro" id="IPR020568">
    <property type="entry name" value="Ribosomal_Su5_D2-typ_SF"/>
</dbReference>
<dbReference type="InterPro" id="IPR014721">
    <property type="entry name" value="Ribsml_uS5_D2-typ_fold_subgr"/>
</dbReference>
<dbReference type="InterPro" id="IPR001241">
    <property type="entry name" value="Topo_IIA"/>
</dbReference>
<dbReference type="InterPro" id="IPR013760">
    <property type="entry name" value="Topo_IIA-like_dom_sf"/>
</dbReference>
<dbReference type="InterPro" id="IPR013758">
    <property type="entry name" value="Topo_IIA_A/C_ab"/>
</dbReference>
<dbReference type="InterPro" id="IPR013757">
    <property type="entry name" value="Topo_IIA_A_a_sf"/>
</dbReference>
<dbReference type="InterPro" id="IPR013759">
    <property type="entry name" value="Topo_IIA_B_C"/>
</dbReference>
<dbReference type="InterPro" id="IPR013506">
    <property type="entry name" value="Topo_IIA_bsu_dom2"/>
</dbReference>
<dbReference type="InterPro" id="IPR002205">
    <property type="entry name" value="Topo_IIA_dom_A"/>
</dbReference>
<dbReference type="InterPro" id="IPR001154">
    <property type="entry name" value="TopoII_euk"/>
</dbReference>
<dbReference type="InterPro" id="IPR018522">
    <property type="entry name" value="TopoIIA_CS"/>
</dbReference>
<dbReference type="InterPro" id="IPR031660">
    <property type="entry name" value="TOPRIM_C"/>
</dbReference>
<dbReference type="InterPro" id="IPR006171">
    <property type="entry name" value="TOPRIM_dom"/>
</dbReference>
<dbReference type="InterPro" id="IPR034157">
    <property type="entry name" value="TOPRIM_TopoII"/>
</dbReference>
<dbReference type="PANTHER" id="PTHR10169:SF38">
    <property type="entry name" value="DNA TOPOISOMERASE 2"/>
    <property type="match status" value="1"/>
</dbReference>
<dbReference type="PANTHER" id="PTHR10169">
    <property type="entry name" value="DNA TOPOISOMERASE/GYRASE"/>
    <property type="match status" value="1"/>
</dbReference>
<dbReference type="Pfam" id="PF00204">
    <property type="entry name" value="DNA_gyraseB"/>
    <property type="match status" value="1"/>
</dbReference>
<dbReference type="Pfam" id="PF00521">
    <property type="entry name" value="DNA_topoisoIV"/>
    <property type="match status" value="1"/>
</dbReference>
<dbReference type="Pfam" id="PF02518">
    <property type="entry name" value="HATPase_c"/>
    <property type="match status" value="1"/>
</dbReference>
<dbReference type="Pfam" id="PF01751">
    <property type="entry name" value="Toprim"/>
    <property type="match status" value="1"/>
</dbReference>
<dbReference type="Pfam" id="PF16898">
    <property type="entry name" value="TOPRIM_C"/>
    <property type="match status" value="1"/>
</dbReference>
<dbReference type="PRINTS" id="PR01158">
    <property type="entry name" value="TOPISMRASEII"/>
</dbReference>
<dbReference type="PRINTS" id="PR00418">
    <property type="entry name" value="TPI2FAMILY"/>
</dbReference>
<dbReference type="SMART" id="SM00387">
    <property type="entry name" value="HATPase_c"/>
    <property type="match status" value="1"/>
</dbReference>
<dbReference type="SMART" id="SM00433">
    <property type="entry name" value="TOP2c"/>
    <property type="match status" value="1"/>
</dbReference>
<dbReference type="SMART" id="SM00434">
    <property type="entry name" value="TOP4c"/>
    <property type="match status" value="1"/>
</dbReference>
<dbReference type="SUPFAM" id="SSF55874">
    <property type="entry name" value="ATPase domain of HSP90 chaperone/DNA topoisomerase II/histidine kinase"/>
    <property type="match status" value="1"/>
</dbReference>
<dbReference type="SUPFAM" id="SSF54211">
    <property type="entry name" value="Ribosomal protein S5 domain 2-like"/>
    <property type="match status" value="1"/>
</dbReference>
<dbReference type="SUPFAM" id="SSF56719">
    <property type="entry name" value="Type II DNA topoisomerase"/>
    <property type="match status" value="1"/>
</dbReference>
<dbReference type="PROSITE" id="PS52040">
    <property type="entry name" value="TOPO_IIA"/>
    <property type="match status" value="1"/>
</dbReference>
<dbReference type="PROSITE" id="PS00177">
    <property type="entry name" value="TOPOISOMERASE_II"/>
    <property type="match status" value="1"/>
</dbReference>
<dbReference type="PROSITE" id="PS50880">
    <property type="entry name" value="TOPRIM"/>
    <property type="match status" value="1"/>
</dbReference>
<comment type="function">
    <text evidence="1">Control of topological states of DNA by transient breakage and subsequent rejoining of DNA strands. Topoisomerase II makes double-strand breaks (By similarity).</text>
</comment>
<comment type="catalytic activity">
    <reaction evidence="3">
        <text>ATP-dependent breakage, passage and rejoining of double-stranded DNA.</text>
        <dbReference type="EC" id="5.6.2.2"/>
    </reaction>
</comment>
<comment type="cofactor">
    <cofactor evidence="3">
        <name>Mg(2+)</name>
        <dbReference type="ChEBI" id="CHEBI:18420"/>
    </cofactor>
    <cofactor evidence="3">
        <name>Mn(2+)</name>
        <dbReference type="ChEBI" id="CHEBI:29035"/>
    </cofactor>
    <cofactor evidence="3">
        <name>Ca(2+)</name>
        <dbReference type="ChEBI" id="CHEBI:29108"/>
    </cofactor>
    <text evidence="3">Binds two Mg(2+) per subunit. The magnesium ions form salt bridges with both the protein and the DNA. Can also accept other divalent metal cations, such as Mn(2+) or Ca(2+).</text>
</comment>
<comment type="subunit">
    <text evidence="1">Homodimer.</text>
</comment>
<comment type="subcellular location">
    <subcellularLocation>
        <location evidence="1">Nucleus</location>
    </subcellularLocation>
</comment>
<comment type="miscellaneous">
    <text>Eukaryotic topoisomerase I and II can relax both negative and positive supercoils, whereas prokaryotic enzymes relax only negative supercoils.</text>
</comment>
<comment type="similarity">
    <text evidence="6">Belongs to the type II topoisomerase family.</text>
</comment>
<name>TOP2_CANGA</name>
<proteinExistence type="inferred from homology"/>
<organism>
    <name type="scientific">Candida glabrata (strain ATCC 2001 / BCRC 20586 / JCM 3761 / NBRC 0622 / NRRL Y-65 / CBS 138)</name>
    <name type="common">Yeast</name>
    <name type="synonym">Nakaseomyces glabratus</name>
    <dbReference type="NCBI Taxonomy" id="284593"/>
    <lineage>
        <taxon>Eukaryota</taxon>
        <taxon>Fungi</taxon>
        <taxon>Dikarya</taxon>
        <taxon>Ascomycota</taxon>
        <taxon>Saccharomycotina</taxon>
        <taxon>Saccharomycetes</taxon>
        <taxon>Saccharomycetales</taxon>
        <taxon>Saccharomycetaceae</taxon>
        <taxon>Nakaseomyces</taxon>
    </lineage>
</organism>
<evidence type="ECO:0000250" key="1"/>
<evidence type="ECO:0000250" key="2">
    <source>
        <dbReference type="UniProtKB" id="P06786"/>
    </source>
</evidence>
<evidence type="ECO:0000255" key="3">
    <source>
        <dbReference type="PROSITE-ProRule" id="PRU00995"/>
    </source>
</evidence>
<evidence type="ECO:0000255" key="4">
    <source>
        <dbReference type="PROSITE-ProRule" id="PRU01384"/>
    </source>
</evidence>
<evidence type="ECO:0000256" key="5">
    <source>
        <dbReference type="SAM" id="MobiDB-lite"/>
    </source>
</evidence>
<evidence type="ECO:0000305" key="6"/>
<reference key="1">
    <citation type="journal article" date="1998" name="Microbiology">
        <title>A controllable gene-expression system for the pathogenic fungus Candida glabrata.</title>
        <authorList>
            <person name="Nakayama H."/>
            <person name="Izuta M."/>
            <person name="Nagahashi S."/>
            <person name="Sihta E.Y."/>
            <person name="Sato Y."/>
            <person name="Yamazaki T."/>
            <person name="Arisawa M."/>
            <person name="Kitada K."/>
        </authorList>
    </citation>
    <scope>NUCLEOTIDE SEQUENCE [GENOMIC DNA]</scope>
    <source>
        <strain>ATCC 2001 / BCRC 20586 / JCM 3761 / NBRC 0622 / NRRL Y-65 / CBS 138</strain>
    </source>
</reference>
<reference key="2">
    <citation type="journal article" date="2004" name="Nature">
        <title>Genome evolution in yeasts.</title>
        <authorList>
            <person name="Dujon B."/>
            <person name="Sherman D."/>
            <person name="Fischer G."/>
            <person name="Durrens P."/>
            <person name="Casaregola S."/>
            <person name="Lafontaine I."/>
            <person name="de Montigny J."/>
            <person name="Marck C."/>
            <person name="Neuveglise C."/>
            <person name="Talla E."/>
            <person name="Goffard N."/>
            <person name="Frangeul L."/>
            <person name="Aigle M."/>
            <person name="Anthouard V."/>
            <person name="Babour A."/>
            <person name="Barbe V."/>
            <person name="Barnay S."/>
            <person name="Blanchin S."/>
            <person name="Beckerich J.-M."/>
            <person name="Beyne E."/>
            <person name="Bleykasten C."/>
            <person name="Boisrame A."/>
            <person name="Boyer J."/>
            <person name="Cattolico L."/>
            <person name="Confanioleri F."/>
            <person name="de Daruvar A."/>
            <person name="Despons L."/>
            <person name="Fabre E."/>
            <person name="Fairhead C."/>
            <person name="Ferry-Dumazet H."/>
            <person name="Groppi A."/>
            <person name="Hantraye F."/>
            <person name="Hennequin C."/>
            <person name="Jauniaux N."/>
            <person name="Joyet P."/>
            <person name="Kachouri R."/>
            <person name="Kerrest A."/>
            <person name="Koszul R."/>
            <person name="Lemaire M."/>
            <person name="Lesur I."/>
            <person name="Ma L."/>
            <person name="Muller H."/>
            <person name="Nicaud J.-M."/>
            <person name="Nikolski M."/>
            <person name="Oztas S."/>
            <person name="Ozier-Kalogeropoulos O."/>
            <person name="Pellenz S."/>
            <person name="Potier S."/>
            <person name="Richard G.-F."/>
            <person name="Straub M.-L."/>
            <person name="Suleau A."/>
            <person name="Swennen D."/>
            <person name="Tekaia F."/>
            <person name="Wesolowski-Louvel M."/>
            <person name="Westhof E."/>
            <person name="Wirth B."/>
            <person name="Zeniou-Meyer M."/>
            <person name="Zivanovic Y."/>
            <person name="Bolotin-Fukuhara M."/>
            <person name="Thierry A."/>
            <person name="Bouchier C."/>
            <person name="Caudron B."/>
            <person name="Scarpelli C."/>
            <person name="Gaillardin C."/>
            <person name="Weissenbach J."/>
            <person name="Wincker P."/>
            <person name="Souciet J.-L."/>
        </authorList>
    </citation>
    <scope>NUCLEOTIDE SEQUENCE [LARGE SCALE GENOMIC DNA]</scope>
    <source>
        <strain>ATCC 2001 / BCRC 20586 / JCM 3761 / NBRC 0622 / NRRL Y-65 / CBS 138</strain>
    </source>
</reference>